<comment type="similarity">
    <text evidence="1">Belongs to the universal ribosomal protein uL29 family.</text>
</comment>
<proteinExistence type="inferred from homology"/>
<sequence>MKAKDIRKKSQEELQKELVELKAELFKLRFQHATNQLENPMKLRDVKKSIARIKTVLRERELKGIEV</sequence>
<organism>
    <name type="scientific">Acetivibrio thermocellus (strain ATCC 27405 / DSM 1237 / JCM 9322 / NBRC 103400 / NCIMB 10682 / NRRL B-4536 / VPI 7372)</name>
    <name type="common">Clostridium thermocellum</name>
    <dbReference type="NCBI Taxonomy" id="203119"/>
    <lineage>
        <taxon>Bacteria</taxon>
        <taxon>Bacillati</taxon>
        <taxon>Bacillota</taxon>
        <taxon>Clostridia</taxon>
        <taxon>Eubacteriales</taxon>
        <taxon>Oscillospiraceae</taxon>
        <taxon>Acetivibrio</taxon>
    </lineage>
</organism>
<feature type="chain" id="PRO_1000007462" description="Large ribosomal subunit protein uL29">
    <location>
        <begin position="1"/>
        <end position="67"/>
    </location>
</feature>
<gene>
    <name evidence="1" type="primary">rpmC</name>
    <name type="ordered locus">Cthe_2911</name>
</gene>
<protein>
    <recommendedName>
        <fullName evidence="1">Large ribosomal subunit protein uL29</fullName>
    </recommendedName>
    <alternativeName>
        <fullName evidence="2">50S ribosomal protein L29</fullName>
    </alternativeName>
</protein>
<evidence type="ECO:0000255" key="1">
    <source>
        <dbReference type="HAMAP-Rule" id="MF_00374"/>
    </source>
</evidence>
<evidence type="ECO:0000305" key="2"/>
<dbReference type="EMBL" id="CP000568">
    <property type="protein sequence ID" value="ABN54109.1"/>
    <property type="molecule type" value="Genomic_DNA"/>
</dbReference>
<dbReference type="RefSeq" id="WP_003514639.1">
    <property type="nucleotide sequence ID" value="NC_009012.1"/>
</dbReference>
<dbReference type="SMR" id="A3DJI0"/>
<dbReference type="STRING" id="203119.Cthe_2911"/>
<dbReference type="GeneID" id="35803339"/>
<dbReference type="KEGG" id="cth:Cthe_2911"/>
<dbReference type="eggNOG" id="COG0255">
    <property type="taxonomic scope" value="Bacteria"/>
</dbReference>
<dbReference type="HOGENOM" id="CLU_158491_5_2_9"/>
<dbReference type="OrthoDB" id="9815192at2"/>
<dbReference type="Proteomes" id="UP000002145">
    <property type="component" value="Chromosome"/>
</dbReference>
<dbReference type="GO" id="GO:0022625">
    <property type="term" value="C:cytosolic large ribosomal subunit"/>
    <property type="evidence" value="ECO:0007669"/>
    <property type="project" value="TreeGrafter"/>
</dbReference>
<dbReference type="GO" id="GO:0003735">
    <property type="term" value="F:structural constituent of ribosome"/>
    <property type="evidence" value="ECO:0007669"/>
    <property type="project" value="InterPro"/>
</dbReference>
<dbReference type="GO" id="GO:0006412">
    <property type="term" value="P:translation"/>
    <property type="evidence" value="ECO:0007669"/>
    <property type="project" value="UniProtKB-UniRule"/>
</dbReference>
<dbReference type="CDD" id="cd00427">
    <property type="entry name" value="Ribosomal_L29_HIP"/>
    <property type="match status" value="1"/>
</dbReference>
<dbReference type="FunFam" id="1.10.287.310:FF:000001">
    <property type="entry name" value="50S ribosomal protein L29"/>
    <property type="match status" value="1"/>
</dbReference>
<dbReference type="Gene3D" id="1.10.287.310">
    <property type="match status" value="1"/>
</dbReference>
<dbReference type="HAMAP" id="MF_00374">
    <property type="entry name" value="Ribosomal_uL29"/>
    <property type="match status" value="1"/>
</dbReference>
<dbReference type="InterPro" id="IPR050063">
    <property type="entry name" value="Ribosomal_protein_uL29"/>
</dbReference>
<dbReference type="InterPro" id="IPR001854">
    <property type="entry name" value="Ribosomal_uL29"/>
</dbReference>
<dbReference type="InterPro" id="IPR018254">
    <property type="entry name" value="Ribosomal_uL29_CS"/>
</dbReference>
<dbReference type="InterPro" id="IPR036049">
    <property type="entry name" value="Ribosomal_uL29_sf"/>
</dbReference>
<dbReference type="NCBIfam" id="TIGR00012">
    <property type="entry name" value="L29"/>
    <property type="match status" value="1"/>
</dbReference>
<dbReference type="PANTHER" id="PTHR10916">
    <property type="entry name" value="60S RIBOSOMAL PROTEIN L35/50S RIBOSOMAL PROTEIN L29"/>
    <property type="match status" value="1"/>
</dbReference>
<dbReference type="PANTHER" id="PTHR10916:SF0">
    <property type="entry name" value="LARGE RIBOSOMAL SUBUNIT PROTEIN UL29C"/>
    <property type="match status" value="1"/>
</dbReference>
<dbReference type="Pfam" id="PF00831">
    <property type="entry name" value="Ribosomal_L29"/>
    <property type="match status" value="1"/>
</dbReference>
<dbReference type="SUPFAM" id="SSF46561">
    <property type="entry name" value="Ribosomal protein L29 (L29p)"/>
    <property type="match status" value="1"/>
</dbReference>
<dbReference type="PROSITE" id="PS00579">
    <property type="entry name" value="RIBOSOMAL_L29"/>
    <property type="match status" value="1"/>
</dbReference>
<keyword id="KW-1185">Reference proteome</keyword>
<keyword id="KW-0687">Ribonucleoprotein</keyword>
<keyword id="KW-0689">Ribosomal protein</keyword>
<reference key="1">
    <citation type="submission" date="2007-02" db="EMBL/GenBank/DDBJ databases">
        <title>Complete sequence of Clostridium thermocellum ATCC 27405.</title>
        <authorList>
            <consortium name="US DOE Joint Genome Institute"/>
            <person name="Copeland A."/>
            <person name="Lucas S."/>
            <person name="Lapidus A."/>
            <person name="Barry K."/>
            <person name="Detter J.C."/>
            <person name="Glavina del Rio T."/>
            <person name="Hammon N."/>
            <person name="Israni S."/>
            <person name="Dalin E."/>
            <person name="Tice H."/>
            <person name="Pitluck S."/>
            <person name="Chertkov O."/>
            <person name="Brettin T."/>
            <person name="Bruce D."/>
            <person name="Han C."/>
            <person name="Tapia R."/>
            <person name="Gilna P."/>
            <person name="Schmutz J."/>
            <person name="Larimer F."/>
            <person name="Land M."/>
            <person name="Hauser L."/>
            <person name="Kyrpides N."/>
            <person name="Mikhailova N."/>
            <person name="Wu J.H.D."/>
            <person name="Newcomb M."/>
            <person name="Richardson P."/>
        </authorList>
    </citation>
    <scope>NUCLEOTIDE SEQUENCE [LARGE SCALE GENOMIC DNA]</scope>
    <source>
        <strain>ATCC 27405 / DSM 1237 / JCM 9322 / NBRC 103400 / NCIMB 10682 / NRRL B-4536 / VPI 7372</strain>
    </source>
</reference>
<name>RL29_ACET2</name>
<accession>A3DJI0</accession>